<evidence type="ECO:0000255" key="1">
    <source>
        <dbReference type="HAMAP-Rule" id="MF_00295"/>
    </source>
</evidence>
<evidence type="ECO:0000269" key="2">
    <source>
    </source>
</evidence>
<evidence type="ECO:0000303" key="3">
    <source>
    </source>
</evidence>
<evidence type="ECO:0000312" key="4">
    <source>
        <dbReference type="EMBL" id="EEF94800.1"/>
    </source>
</evidence>
<reference key="1">
    <citation type="submission" date="2008-12" db="EMBL/GenBank/DDBJ databases">
        <authorList>
            <person name="Fulton L."/>
            <person name="Clifton S."/>
            <person name="Fulton B."/>
            <person name="Xu J."/>
            <person name="Minx P."/>
            <person name="Pepin K.H."/>
            <person name="Johnson M."/>
            <person name="Bhonagiri V."/>
            <person name="Nash W.E."/>
            <person name="Mardis E.R."/>
            <person name="Wilson R.K."/>
        </authorList>
    </citation>
    <scope>NUCLEOTIDE SEQUENCE [LARGE SCALE GENOMIC DNA]</scope>
    <source>
        <strain>DSM 15897 / JCM 10609 / CCUG 48821 A / CIP 106738 / RCA14-39</strain>
    </source>
</reference>
<reference key="2">
    <citation type="journal article" date="2017" name="Nat. Chem. Biol.">
        <title>Parallel evolution of non-homologous isofunctional enzymes in methionine biosynthesis.</title>
        <authorList>
            <person name="Bastard K."/>
            <person name="Perret A."/>
            <person name="Mariage A."/>
            <person name="Bessonnet T."/>
            <person name="Pinet-Turpault A."/>
            <person name="Petit J.L."/>
            <person name="Darii E."/>
            <person name="Bazire P."/>
            <person name="Vergne-Vaxelaire C."/>
            <person name="Brewee C."/>
            <person name="Debard A."/>
            <person name="Pellouin V."/>
            <person name="Besnard-Gonnet M."/>
            <person name="Artiguenave F."/>
            <person name="Medigue C."/>
            <person name="Vallenet D."/>
            <person name="Danchin A."/>
            <person name="Zaparucha A."/>
            <person name="Weissenbach J."/>
            <person name="Salanoubat M."/>
            <person name="de Berardinis V."/>
        </authorList>
    </citation>
    <scope>FUNCTION</scope>
    <scope>CATALYTIC ACTIVITY</scope>
</reference>
<dbReference type="EC" id="2.3.1.31" evidence="1 2"/>
<dbReference type="EMBL" id="ACCK01000034">
    <property type="protein sequence ID" value="EEF94800.1"/>
    <property type="molecule type" value="Genomic_DNA"/>
</dbReference>
<dbReference type="SMR" id="E2NPN0"/>
<dbReference type="OrthoDB" id="9772423at2"/>
<dbReference type="UniPathway" id="UPA00051">
    <property type="reaction ID" value="UER00074"/>
</dbReference>
<dbReference type="GO" id="GO:0005737">
    <property type="term" value="C:cytoplasm"/>
    <property type="evidence" value="ECO:0007669"/>
    <property type="project" value="UniProtKB-SubCell"/>
</dbReference>
<dbReference type="GO" id="GO:0004414">
    <property type="term" value="F:homoserine O-acetyltransferase activity"/>
    <property type="evidence" value="ECO:0007669"/>
    <property type="project" value="UniProtKB-EC"/>
</dbReference>
<dbReference type="GO" id="GO:0008899">
    <property type="term" value="F:homoserine O-succinyltransferase activity"/>
    <property type="evidence" value="ECO:0007669"/>
    <property type="project" value="UniProtKB-UniRule"/>
</dbReference>
<dbReference type="GO" id="GO:0019281">
    <property type="term" value="P:L-methionine biosynthetic process from homoserine via O-succinyl-L-homoserine and cystathionine"/>
    <property type="evidence" value="ECO:0007669"/>
    <property type="project" value="InterPro"/>
</dbReference>
<dbReference type="CDD" id="cd03131">
    <property type="entry name" value="GATase1_HTS"/>
    <property type="match status" value="1"/>
</dbReference>
<dbReference type="FunFam" id="3.40.50.880:FF:000004">
    <property type="entry name" value="Homoserine O-succinyltransferase"/>
    <property type="match status" value="1"/>
</dbReference>
<dbReference type="Gene3D" id="3.40.50.880">
    <property type="match status" value="1"/>
</dbReference>
<dbReference type="HAMAP" id="MF_00295">
    <property type="entry name" value="MetA_acyltransf"/>
    <property type="match status" value="1"/>
</dbReference>
<dbReference type="InterPro" id="IPR029062">
    <property type="entry name" value="Class_I_gatase-like"/>
</dbReference>
<dbReference type="InterPro" id="IPR005697">
    <property type="entry name" value="HST_MetA"/>
</dbReference>
<dbReference type="InterPro" id="IPR033752">
    <property type="entry name" value="MetA_family"/>
</dbReference>
<dbReference type="NCBIfam" id="TIGR01001">
    <property type="entry name" value="metA"/>
    <property type="match status" value="1"/>
</dbReference>
<dbReference type="PANTHER" id="PTHR20919">
    <property type="entry name" value="HOMOSERINE O-SUCCINYLTRANSFERASE"/>
    <property type="match status" value="1"/>
</dbReference>
<dbReference type="PANTHER" id="PTHR20919:SF0">
    <property type="entry name" value="HOMOSERINE O-SUCCINYLTRANSFERASE"/>
    <property type="match status" value="1"/>
</dbReference>
<dbReference type="Pfam" id="PF04204">
    <property type="entry name" value="HTS"/>
    <property type="match status" value="1"/>
</dbReference>
<dbReference type="PIRSF" id="PIRSF000450">
    <property type="entry name" value="H_ser_succinyltr"/>
    <property type="match status" value="1"/>
</dbReference>
<dbReference type="SUPFAM" id="SSF52317">
    <property type="entry name" value="Class I glutamine amidotransferase-like"/>
    <property type="match status" value="1"/>
</dbReference>
<proteinExistence type="evidence at protein level"/>
<keyword id="KW-0012">Acyltransferase</keyword>
<keyword id="KW-0028">Amino-acid biosynthesis</keyword>
<keyword id="KW-0963">Cytoplasm</keyword>
<keyword id="KW-0486">Methionine biosynthesis</keyword>
<keyword id="KW-0808">Transferase</keyword>
<feature type="chain" id="PRO_0000440338" description="Homoserine O-acetyltransferase">
    <location>
        <begin position="1"/>
        <end position="312"/>
    </location>
</feature>
<feature type="active site" description="Acyl-thioester intermediate" evidence="1">
    <location>
        <position position="142"/>
    </location>
</feature>
<feature type="active site" description="Proton acceptor" evidence="1">
    <location>
        <position position="237"/>
    </location>
</feature>
<feature type="active site" evidence="1">
    <location>
        <position position="239"/>
    </location>
</feature>
<feature type="binding site" evidence="1">
    <location>
        <position position="163"/>
    </location>
    <ligand>
        <name>substrate</name>
    </ligand>
</feature>
<feature type="binding site" evidence="1">
    <location>
        <position position="194"/>
    </location>
    <ligand>
        <name>substrate</name>
    </ligand>
</feature>
<feature type="binding site" evidence="1">
    <location>
        <position position="251"/>
    </location>
    <ligand>
        <name>substrate</name>
    </ligand>
</feature>
<feature type="site" description="Important for acyl-CoA specificity" evidence="1">
    <location>
        <position position="111"/>
    </location>
</feature>
<feature type="site" description="Important for substrate specificity" evidence="1">
    <location>
        <position position="194"/>
    </location>
</feature>
<accession>E2NPN0</accession>
<comment type="function">
    <text evidence="1 2">Transfers an acetyl group from acetyl-CoA to L-homoserine, forming acetyl-L-homoserine.</text>
</comment>
<comment type="catalytic activity">
    <reaction evidence="1 2">
        <text>L-homoserine + acetyl-CoA = O-acetyl-L-homoserine + CoA</text>
        <dbReference type="Rhea" id="RHEA:13701"/>
        <dbReference type="ChEBI" id="CHEBI:57287"/>
        <dbReference type="ChEBI" id="CHEBI:57288"/>
        <dbReference type="ChEBI" id="CHEBI:57476"/>
        <dbReference type="ChEBI" id="CHEBI:57716"/>
        <dbReference type="EC" id="2.3.1.31"/>
    </reaction>
</comment>
<comment type="pathway">
    <text evidence="1">Amino-acid biosynthesis; L-methionine biosynthesis via de novo pathway; O-acetyl-L-homoserine from L-homoserine: step 1/1.</text>
</comment>
<comment type="subcellular location">
    <subcellularLocation>
        <location evidence="1">Cytoplasm</location>
    </subcellularLocation>
</comment>
<comment type="similarity">
    <text evidence="1">Belongs to the MetA family.</text>
</comment>
<organism>
    <name type="scientific">Catenibacterium mitsuokai (strain DSM 15897 / JCM 10609 / CCUG 48821 A / CIP 106738 / RCA14-39)</name>
    <dbReference type="NCBI Taxonomy" id="451640"/>
    <lineage>
        <taxon>Bacteria</taxon>
        <taxon>Bacillati</taxon>
        <taxon>Bacillota</taxon>
        <taxon>Erysipelotrichia</taxon>
        <taxon>Erysipelotrichales</taxon>
        <taxon>Coprobacillaceae</taxon>
        <taxon>Catenibacterium</taxon>
    </lineage>
</organism>
<gene>
    <name evidence="1 3" type="primary">metAA</name>
    <name evidence="4" type="synonym">metA</name>
    <name evidence="4" type="ORF">CATMIT_00521</name>
</gene>
<name>METAA_CATMR</name>
<protein>
    <recommendedName>
        <fullName evidence="1">Homoserine O-acetyltransferase</fullName>
        <shortName evidence="1 3">HAT</shortName>
        <ecNumber evidence="1 2">2.3.1.31</ecNumber>
    </recommendedName>
    <alternativeName>
        <fullName evidence="1">Homoserine transacetylase</fullName>
        <shortName evidence="1">HTA</shortName>
    </alternativeName>
</protein>
<sequence length="312" mass="36882">MPINIPDDLPAYKVLTAENIFVMNQTRATTQRIRPLKILIVNIMPLKITTETQLLRLLSNTPLQLEVELIHMSTHDSKNVPKEHLLTFYKTFKDIKENSYDGMIITGAPVEQMPFEEVDYWNELSEIFEWAKTHVFSSFFICWASQAALHYYYDIDKYLLKHKLTGVYRHHTNQRKMRRKILRGFDYQFYAPHSRYTTVLKEDISSNPNLDILAESDDAGVYLVASKDGSQFFVTGHPEYDPDTLDKEYKRDKEKPGVIAELPKNYYLDDDPSQEIQVKWRSHAYLLFSNWLNYYVYQETPYDLSDLHERKK</sequence>